<organism>
    <name type="scientific">Acidovorax sp. (strain JS42)</name>
    <dbReference type="NCBI Taxonomy" id="232721"/>
    <lineage>
        <taxon>Bacteria</taxon>
        <taxon>Pseudomonadati</taxon>
        <taxon>Pseudomonadota</taxon>
        <taxon>Betaproteobacteria</taxon>
        <taxon>Burkholderiales</taxon>
        <taxon>Comamonadaceae</taxon>
        <taxon>Acidovorax</taxon>
    </lineage>
</organism>
<comment type="function">
    <text evidence="1">Catalyzes the GTP-dependent ribosomal translocation step during translation elongation. During this step, the ribosome changes from the pre-translocational (PRE) to the post-translocational (POST) state as the newly formed A-site-bound peptidyl-tRNA and P-site-bound deacylated tRNA move to the P and E sites, respectively. Catalyzes the coordinated movement of the two tRNA molecules, the mRNA and conformational changes in the ribosome.</text>
</comment>
<comment type="subcellular location">
    <subcellularLocation>
        <location evidence="1">Cytoplasm</location>
    </subcellularLocation>
</comment>
<comment type="similarity">
    <text evidence="1">Belongs to the TRAFAC class translation factor GTPase superfamily. Classic translation factor GTPase family. EF-G/EF-2 subfamily.</text>
</comment>
<accession>A1W2Q4</accession>
<protein>
    <recommendedName>
        <fullName evidence="1">Elongation factor G</fullName>
        <shortName evidence="1">EF-G</shortName>
    </recommendedName>
</protein>
<proteinExistence type="inferred from homology"/>
<reference key="1">
    <citation type="submission" date="2006-12" db="EMBL/GenBank/DDBJ databases">
        <title>Complete sequence of chromosome 1 of Acidovorax sp. JS42.</title>
        <authorList>
            <person name="Copeland A."/>
            <person name="Lucas S."/>
            <person name="Lapidus A."/>
            <person name="Barry K."/>
            <person name="Detter J.C."/>
            <person name="Glavina del Rio T."/>
            <person name="Dalin E."/>
            <person name="Tice H."/>
            <person name="Pitluck S."/>
            <person name="Chertkov O."/>
            <person name="Brettin T."/>
            <person name="Bruce D."/>
            <person name="Han C."/>
            <person name="Tapia R."/>
            <person name="Gilna P."/>
            <person name="Schmutz J."/>
            <person name="Larimer F."/>
            <person name="Land M."/>
            <person name="Hauser L."/>
            <person name="Kyrpides N."/>
            <person name="Kim E."/>
            <person name="Stahl D."/>
            <person name="Richardson P."/>
        </authorList>
    </citation>
    <scope>NUCLEOTIDE SEQUENCE [LARGE SCALE GENOMIC DNA]</scope>
    <source>
        <strain>JS42</strain>
    </source>
</reference>
<gene>
    <name evidence="1" type="primary">fusA</name>
    <name type="ordered locus">Ajs_0275</name>
</gene>
<name>EFG_ACISJ</name>
<keyword id="KW-0963">Cytoplasm</keyword>
<keyword id="KW-0251">Elongation factor</keyword>
<keyword id="KW-0342">GTP-binding</keyword>
<keyword id="KW-0547">Nucleotide-binding</keyword>
<keyword id="KW-0648">Protein biosynthesis</keyword>
<dbReference type="EMBL" id="CP000539">
    <property type="protein sequence ID" value="ABM40529.1"/>
    <property type="molecule type" value="Genomic_DNA"/>
</dbReference>
<dbReference type="SMR" id="A1W2Q4"/>
<dbReference type="STRING" id="232721.Ajs_0275"/>
<dbReference type="KEGG" id="ajs:Ajs_0275"/>
<dbReference type="eggNOG" id="COG0480">
    <property type="taxonomic scope" value="Bacteria"/>
</dbReference>
<dbReference type="HOGENOM" id="CLU_002794_4_1_4"/>
<dbReference type="Proteomes" id="UP000000645">
    <property type="component" value="Chromosome"/>
</dbReference>
<dbReference type="GO" id="GO:0005737">
    <property type="term" value="C:cytoplasm"/>
    <property type="evidence" value="ECO:0007669"/>
    <property type="project" value="UniProtKB-SubCell"/>
</dbReference>
<dbReference type="GO" id="GO:0005525">
    <property type="term" value="F:GTP binding"/>
    <property type="evidence" value="ECO:0007669"/>
    <property type="project" value="UniProtKB-UniRule"/>
</dbReference>
<dbReference type="GO" id="GO:0003924">
    <property type="term" value="F:GTPase activity"/>
    <property type="evidence" value="ECO:0007669"/>
    <property type="project" value="InterPro"/>
</dbReference>
<dbReference type="GO" id="GO:0097216">
    <property type="term" value="F:guanosine tetraphosphate binding"/>
    <property type="evidence" value="ECO:0007669"/>
    <property type="project" value="UniProtKB-ARBA"/>
</dbReference>
<dbReference type="GO" id="GO:0003746">
    <property type="term" value="F:translation elongation factor activity"/>
    <property type="evidence" value="ECO:0007669"/>
    <property type="project" value="UniProtKB-UniRule"/>
</dbReference>
<dbReference type="GO" id="GO:0032790">
    <property type="term" value="P:ribosome disassembly"/>
    <property type="evidence" value="ECO:0007669"/>
    <property type="project" value="TreeGrafter"/>
</dbReference>
<dbReference type="CDD" id="cd01886">
    <property type="entry name" value="EF-G"/>
    <property type="match status" value="1"/>
</dbReference>
<dbReference type="CDD" id="cd16262">
    <property type="entry name" value="EFG_III"/>
    <property type="match status" value="1"/>
</dbReference>
<dbReference type="CDD" id="cd01434">
    <property type="entry name" value="EFG_mtEFG1_IV"/>
    <property type="match status" value="1"/>
</dbReference>
<dbReference type="CDD" id="cd03713">
    <property type="entry name" value="EFG_mtEFG_C"/>
    <property type="match status" value="1"/>
</dbReference>
<dbReference type="CDD" id="cd04088">
    <property type="entry name" value="EFG_mtEFG_II"/>
    <property type="match status" value="1"/>
</dbReference>
<dbReference type="FunFam" id="2.40.30.10:FF:000006">
    <property type="entry name" value="Elongation factor G"/>
    <property type="match status" value="1"/>
</dbReference>
<dbReference type="FunFam" id="3.30.230.10:FF:000003">
    <property type="entry name" value="Elongation factor G"/>
    <property type="match status" value="1"/>
</dbReference>
<dbReference type="FunFam" id="3.30.70.240:FF:000001">
    <property type="entry name" value="Elongation factor G"/>
    <property type="match status" value="1"/>
</dbReference>
<dbReference type="FunFam" id="3.30.70.870:FF:000001">
    <property type="entry name" value="Elongation factor G"/>
    <property type="match status" value="1"/>
</dbReference>
<dbReference type="FunFam" id="3.40.50.300:FF:000029">
    <property type="entry name" value="Elongation factor G"/>
    <property type="match status" value="1"/>
</dbReference>
<dbReference type="Gene3D" id="3.30.230.10">
    <property type="match status" value="1"/>
</dbReference>
<dbReference type="Gene3D" id="3.30.70.240">
    <property type="match status" value="1"/>
</dbReference>
<dbReference type="Gene3D" id="3.30.70.870">
    <property type="entry name" value="Elongation Factor G (Translational Gtpase), domain 3"/>
    <property type="match status" value="1"/>
</dbReference>
<dbReference type="Gene3D" id="3.40.50.300">
    <property type="entry name" value="P-loop containing nucleotide triphosphate hydrolases"/>
    <property type="match status" value="1"/>
</dbReference>
<dbReference type="Gene3D" id="2.40.30.10">
    <property type="entry name" value="Translation factors"/>
    <property type="match status" value="1"/>
</dbReference>
<dbReference type="HAMAP" id="MF_00054_B">
    <property type="entry name" value="EF_G_EF_2_B"/>
    <property type="match status" value="1"/>
</dbReference>
<dbReference type="InterPro" id="IPR041095">
    <property type="entry name" value="EFG_II"/>
</dbReference>
<dbReference type="InterPro" id="IPR009022">
    <property type="entry name" value="EFG_III"/>
</dbReference>
<dbReference type="InterPro" id="IPR035647">
    <property type="entry name" value="EFG_III/V"/>
</dbReference>
<dbReference type="InterPro" id="IPR047872">
    <property type="entry name" value="EFG_IV"/>
</dbReference>
<dbReference type="InterPro" id="IPR035649">
    <property type="entry name" value="EFG_V"/>
</dbReference>
<dbReference type="InterPro" id="IPR000640">
    <property type="entry name" value="EFG_V-like"/>
</dbReference>
<dbReference type="InterPro" id="IPR004161">
    <property type="entry name" value="EFTu-like_2"/>
</dbReference>
<dbReference type="InterPro" id="IPR031157">
    <property type="entry name" value="G_TR_CS"/>
</dbReference>
<dbReference type="InterPro" id="IPR027417">
    <property type="entry name" value="P-loop_NTPase"/>
</dbReference>
<dbReference type="InterPro" id="IPR020568">
    <property type="entry name" value="Ribosomal_Su5_D2-typ_SF"/>
</dbReference>
<dbReference type="InterPro" id="IPR014721">
    <property type="entry name" value="Ribsml_uS5_D2-typ_fold_subgr"/>
</dbReference>
<dbReference type="InterPro" id="IPR005225">
    <property type="entry name" value="Small_GTP-bd"/>
</dbReference>
<dbReference type="InterPro" id="IPR000795">
    <property type="entry name" value="T_Tr_GTP-bd_dom"/>
</dbReference>
<dbReference type="InterPro" id="IPR009000">
    <property type="entry name" value="Transl_B-barrel_sf"/>
</dbReference>
<dbReference type="InterPro" id="IPR004540">
    <property type="entry name" value="Transl_elong_EFG/EF2"/>
</dbReference>
<dbReference type="InterPro" id="IPR005517">
    <property type="entry name" value="Transl_elong_EFG/EF2_IV"/>
</dbReference>
<dbReference type="NCBIfam" id="TIGR00484">
    <property type="entry name" value="EF-G"/>
    <property type="match status" value="1"/>
</dbReference>
<dbReference type="NCBIfam" id="NF009379">
    <property type="entry name" value="PRK12740.1-3"/>
    <property type="match status" value="1"/>
</dbReference>
<dbReference type="NCBIfam" id="NF009381">
    <property type="entry name" value="PRK12740.1-5"/>
    <property type="match status" value="1"/>
</dbReference>
<dbReference type="NCBIfam" id="TIGR00231">
    <property type="entry name" value="small_GTP"/>
    <property type="match status" value="1"/>
</dbReference>
<dbReference type="PANTHER" id="PTHR43261:SF1">
    <property type="entry name" value="RIBOSOME-RELEASING FACTOR 2, MITOCHONDRIAL"/>
    <property type="match status" value="1"/>
</dbReference>
<dbReference type="PANTHER" id="PTHR43261">
    <property type="entry name" value="TRANSLATION ELONGATION FACTOR G-RELATED"/>
    <property type="match status" value="1"/>
</dbReference>
<dbReference type="Pfam" id="PF00679">
    <property type="entry name" value="EFG_C"/>
    <property type="match status" value="1"/>
</dbReference>
<dbReference type="Pfam" id="PF14492">
    <property type="entry name" value="EFG_III"/>
    <property type="match status" value="1"/>
</dbReference>
<dbReference type="Pfam" id="PF03764">
    <property type="entry name" value="EFG_IV"/>
    <property type="match status" value="1"/>
</dbReference>
<dbReference type="Pfam" id="PF00009">
    <property type="entry name" value="GTP_EFTU"/>
    <property type="match status" value="1"/>
</dbReference>
<dbReference type="Pfam" id="PF03144">
    <property type="entry name" value="GTP_EFTU_D2"/>
    <property type="match status" value="1"/>
</dbReference>
<dbReference type="PRINTS" id="PR00315">
    <property type="entry name" value="ELONGATNFCT"/>
</dbReference>
<dbReference type="SMART" id="SM00838">
    <property type="entry name" value="EFG_C"/>
    <property type="match status" value="1"/>
</dbReference>
<dbReference type="SMART" id="SM00889">
    <property type="entry name" value="EFG_IV"/>
    <property type="match status" value="1"/>
</dbReference>
<dbReference type="SUPFAM" id="SSF54980">
    <property type="entry name" value="EF-G C-terminal domain-like"/>
    <property type="match status" value="2"/>
</dbReference>
<dbReference type="SUPFAM" id="SSF52540">
    <property type="entry name" value="P-loop containing nucleoside triphosphate hydrolases"/>
    <property type="match status" value="1"/>
</dbReference>
<dbReference type="SUPFAM" id="SSF54211">
    <property type="entry name" value="Ribosomal protein S5 domain 2-like"/>
    <property type="match status" value="1"/>
</dbReference>
<dbReference type="SUPFAM" id="SSF50447">
    <property type="entry name" value="Translation proteins"/>
    <property type="match status" value="1"/>
</dbReference>
<dbReference type="PROSITE" id="PS00301">
    <property type="entry name" value="G_TR_1"/>
    <property type="match status" value="1"/>
</dbReference>
<dbReference type="PROSITE" id="PS51722">
    <property type="entry name" value="G_TR_2"/>
    <property type="match status" value="1"/>
</dbReference>
<sequence length="702" mass="77577">MARKTPIERYRNIGISAHIDAGKTTTTERILFYTGVTHKLGEVHDGAATTDWMEQEQERGITITSAAVTCFWKGMDMSYPEHRFNIIDTPGHVDFTIEVERSMRVLDGACMVYCAVGGVQPQSETVWRQANKYKVPRLAFVNKMDRTGANFFKVVDQIKTRLKGNPVPVVVPIGAEDNFKGVVDLLKMKAIIWDEASQGMKFEYTDIPAEVKETAEKWRENMVEAAAEASEELMNKYLDEGTLSEEDIKAGLRARTLAVEIQPMLCGTAFKNKGVQRMLDAVIDYLPSPVDIPDVEGTDPDDEEKKLARKADDGEKFSALAFKLMTDPFVGQLTFVRVYSGVLSKGDTVFNSVKGKKERIGRIVQMMANERIEVDEIRAGDIAACVGLKDVTTGETLSDVDNPIILERMVFPEPVIAQAVEPKSKADQEKMGIALSRLASEDPSFRVRTDEESGQTIIAGMGELHLEIIVDRMKREFNVEANVGKPQVAYRETVRKTVTDVDGKFVRQSGGKGQYGHVVFTLEPQEAGKGFEFVDEIKGGVVPREYIPAVQKGVEEALTSGVLAGYPVVDVKVRLTFGSYHDVDSSEQAFKMAAIFGFKEAARKANPVILEPMMAVEVETPEDYAGTVMGDLSSRRGMVQGMDDMVGGGKAIKAEVPLSEMFGYATQLRSMTQGRATYTMEFKHYAEAPRNVAEAIVAARAK</sequence>
<evidence type="ECO:0000255" key="1">
    <source>
        <dbReference type="HAMAP-Rule" id="MF_00054"/>
    </source>
</evidence>
<feature type="chain" id="PRO_1000008798" description="Elongation factor G">
    <location>
        <begin position="1"/>
        <end position="702"/>
    </location>
</feature>
<feature type="domain" description="tr-type G">
    <location>
        <begin position="8"/>
        <end position="290"/>
    </location>
</feature>
<feature type="binding site" evidence="1">
    <location>
        <begin position="17"/>
        <end position="24"/>
    </location>
    <ligand>
        <name>GTP</name>
        <dbReference type="ChEBI" id="CHEBI:37565"/>
    </ligand>
</feature>
<feature type="binding site" evidence="1">
    <location>
        <begin position="88"/>
        <end position="92"/>
    </location>
    <ligand>
        <name>GTP</name>
        <dbReference type="ChEBI" id="CHEBI:37565"/>
    </ligand>
</feature>
<feature type="binding site" evidence="1">
    <location>
        <begin position="142"/>
        <end position="145"/>
    </location>
    <ligand>
        <name>GTP</name>
        <dbReference type="ChEBI" id="CHEBI:37565"/>
    </ligand>
</feature>